<gene>
    <name evidence="1" type="primary">ssuB</name>
    <name type="ordered locus">Cgl1222</name>
    <name type="ordered locus">cg1379</name>
</gene>
<evidence type="ECO:0000255" key="1">
    <source>
        <dbReference type="HAMAP-Rule" id="MF_01724"/>
    </source>
</evidence>
<evidence type="ECO:0000269" key="2">
    <source>
    </source>
</evidence>
<evidence type="ECO:0000305" key="3"/>
<dbReference type="EC" id="7.6.2.14" evidence="1"/>
<dbReference type="EMBL" id="BA000036">
    <property type="protein sequence ID" value="BAB98615.1"/>
    <property type="molecule type" value="Genomic_DNA"/>
</dbReference>
<dbReference type="EMBL" id="BX927151">
    <property type="protein sequence ID" value="CAF19926.1"/>
    <property type="molecule type" value="Genomic_DNA"/>
</dbReference>
<dbReference type="RefSeq" id="NP_600446.1">
    <property type="nucleotide sequence ID" value="NC_003450.3"/>
</dbReference>
<dbReference type="RefSeq" id="WP_011014212.1">
    <property type="nucleotide sequence ID" value="NC_006958.1"/>
</dbReference>
<dbReference type="SMR" id="Q8NR42"/>
<dbReference type="STRING" id="196627.cg1379"/>
<dbReference type="TCDB" id="3.A.1.17.12">
    <property type="family name" value="the atp-binding cassette (abc) superfamily"/>
</dbReference>
<dbReference type="KEGG" id="cgb:cg1379"/>
<dbReference type="KEGG" id="cgl:Cgl1222"/>
<dbReference type="PATRIC" id="fig|196627.13.peg.1202"/>
<dbReference type="eggNOG" id="COG1116">
    <property type="taxonomic scope" value="Bacteria"/>
</dbReference>
<dbReference type="HOGENOM" id="CLU_000604_1_22_11"/>
<dbReference type="OrthoDB" id="8773773at2"/>
<dbReference type="BioCyc" id="CORYNE:G18NG-10795-MONOMER"/>
<dbReference type="Proteomes" id="UP000000582">
    <property type="component" value="Chromosome"/>
</dbReference>
<dbReference type="Proteomes" id="UP000001009">
    <property type="component" value="Chromosome"/>
</dbReference>
<dbReference type="GO" id="GO:0005886">
    <property type="term" value="C:plasma membrane"/>
    <property type="evidence" value="ECO:0007669"/>
    <property type="project" value="UniProtKB-SubCell"/>
</dbReference>
<dbReference type="GO" id="GO:0005524">
    <property type="term" value="F:ATP binding"/>
    <property type="evidence" value="ECO:0007669"/>
    <property type="project" value="UniProtKB-KW"/>
</dbReference>
<dbReference type="GO" id="GO:0016887">
    <property type="term" value="F:ATP hydrolysis activity"/>
    <property type="evidence" value="ECO:0007669"/>
    <property type="project" value="InterPro"/>
</dbReference>
<dbReference type="Gene3D" id="3.40.50.300">
    <property type="entry name" value="P-loop containing nucleotide triphosphate hydrolases"/>
    <property type="match status" value="1"/>
</dbReference>
<dbReference type="InterPro" id="IPR003593">
    <property type="entry name" value="AAA+_ATPase"/>
</dbReference>
<dbReference type="InterPro" id="IPR003439">
    <property type="entry name" value="ABC_transporter-like_ATP-bd"/>
</dbReference>
<dbReference type="InterPro" id="IPR017871">
    <property type="entry name" value="ABC_transporter-like_CS"/>
</dbReference>
<dbReference type="InterPro" id="IPR050166">
    <property type="entry name" value="ABC_transporter_ATP-bind"/>
</dbReference>
<dbReference type="InterPro" id="IPR027417">
    <property type="entry name" value="P-loop_NTPase"/>
</dbReference>
<dbReference type="PANTHER" id="PTHR42788:SF17">
    <property type="entry name" value="ALIPHATIC SULFONATES IMPORT ATP-BINDING PROTEIN SSUB"/>
    <property type="match status" value="1"/>
</dbReference>
<dbReference type="PANTHER" id="PTHR42788">
    <property type="entry name" value="TAURINE IMPORT ATP-BINDING PROTEIN-RELATED"/>
    <property type="match status" value="1"/>
</dbReference>
<dbReference type="Pfam" id="PF00005">
    <property type="entry name" value="ABC_tran"/>
    <property type="match status" value="1"/>
</dbReference>
<dbReference type="SMART" id="SM00382">
    <property type="entry name" value="AAA"/>
    <property type="match status" value="1"/>
</dbReference>
<dbReference type="SUPFAM" id="SSF52540">
    <property type="entry name" value="P-loop containing nucleoside triphosphate hydrolases"/>
    <property type="match status" value="1"/>
</dbReference>
<dbReference type="PROSITE" id="PS00211">
    <property type="entry name" value="ABC_TRANSPORTER_1"/>
    <property type="match status" value="1"/>
</dbReference>
<dbReference type="PROSITE" id="PS50893">
    <property type="entry name" value="ABC_TRANSPORTER_2"/>
    <property type="match status" value="1"/>
</dbReference>
<dbReference type="PROSITE" id="PS51291">
    <property type="entry name" value="SSUB"/>
    <property type="match status" value="1"/>
</dbReference>
<feature type="chain" id="PRO_0000279910" description="Aliphatic sulfonates import ATP-binding protein SsuB">
    <location>
        <begin position="1"/>
        <end position="243"/>
    </location>
</feature>
<feature type="domain" description="ABC transporter" evidence="1">
    <location>
        <begin position="11"/>
        <end position="230"/>
    </location>
</feature>
<feature type="binding site" evidence="1">
    <location>
        <begin position="43"/>
        <end position="50"/>
    </location>
    <ligand>
        <name>ATP</name>
        <dbReference type="ChEBI" id="CHEBI:30616"/>
    </ligand>
</feature>
<sequence length="243" mass="25977">MTATLSLKPAATVRGLRKSYGTKEVLQGIDLTINCGEVTALIGRSGSGKSTILRVLAGLSKEHSGSVEISGNPAVAFQEPRLLPWKTVLDNVTFGLNRTDISWSEAQERASALLAEVKLPDSDAAWPLTLSGGQAQRVSLARALISEPELLLLDEPFGALDALTRLTAQDLLLKTVNTRNLGVLLVTHDVSEAIALADHVLLLDDGAITHSLTVDIPGDRRTHPSFASYTAQLLEWLEITTPA</sequence>
<comment type="function">
    <text evidence="1 2 3">Part of the ABC transporter complex SsuABC involved in aliphatic sulfonates import. Responsible for energy coupling to the transport system (Probable). Is also involved in taurine transport. Seems to not be involved in long chain aliphatic sulfonates transport (chain length of eight carbon atoms or more).</text>
</comment>
<comment type="catalytic activity">
    <reaction evidence="1">
        <text>ATP + H2O + aliphatic sulfonate-[sulfonate-binding protein]Side 1 = ADP + phosphate + aliphatic sulfonateSide 2 + [sulfonate-binding protein]Side 1.</text>
        <dbReference type="EC" id="7.6.2.14"/>
    </reaction>
</comment>
<comment type="subunit">
    <text evidence="1">The complex is composed of two ATP-binding proteins (SsuB), two transmembrane proteins (SsuC) and a solute-binding protein (SsuA).</text>
</comment>
<comment type="subcellular location">
    <subcellularLocation>
        <location evidence="1">Cell membrane</location>
        <topology evidence="1">Peripheral membrane protein</topology>
    </subcellularLocation>
</comment>
<comment type="similarity">
    <text evidence="1">Belongs to the ABC transporter superfamily. Aliphatic sulfonates importer (TC 3.A.1.17.2) family.</text>
</comment>
<organism>
    <name type="scientific">Corynebacterium glutamicum (strain ATCC 13032 / DSM 20300 / JCM 1318 / BCRC 11384 / CCUG 27702 / LMG 3730 / NBRC 12168 / NCIMB 10025 / NRRL B-2784 / 534)</name>
    <dbReference type="NCBI Taxonomy" id="196627"/>
    <lineage>
        <taxon>Bacteria</taxon>
        <taxon>Bacillati</taxon>
        <taxon>Actinomycetota</taxon>
        <taxon>Actinomycetes</taxon>
        <taxon>Mycobacteriales</taxon>
        <taxon>Corynebacteriaceae</taxon>
        <taxon>Corynebacterium</taxon>
    </lineage>
</organism>
<protein>
    <recommendedName>
        <fullName evidence="1">Aliphatic sulfonates import ATP-binding protein SsuB</fullName>
        <ecNumber evidence="1">7.6.2.14</ecNumber>
    </recommendedName>
</protein>
<name>SSUB_CORGL</name>
<accession>Q8NR42</accession>
<accession>Q6M5W0</accession>
<proteinExistence type="evidence at protein level"/>
<reference key="1">
    <citation type="journal article" date="2003" name="Appl. Microbiol. Biotechnol.">
        <title>The Corynebacterium glutamicum genome: features and impacts on biotechnological processes.</title>
        <authorList>
            <person name="Ikeda M."/>
            <person name="Nakagawa S."/>
        </authorList>
    </citation>
    <scope>NUCLEOTIDE SEQUENCE [LARGE SCALE GENOMIC DNA]</scope>
    <source>
        <strain>ATCC 13032 / DSM 20300 / JCM 1318 / BCRC 11384 / CCUG 27702 / LMG 3730 / NBRC 12168 / NCIMB 10025 / NRRL B-2784 / 534</strain>
    </source>
</reference>
<reference key="2">
    <citation type="journal article" date="2003" name="J. Biotechnol.">
        <title>The complete Corynebacterium glutamicum ATCC 13032 genome sequence and its impact on the production of L-aspartate-derived amino acids and vitamins.</title>
        <authorList>
            <person name="Kalinowski J."/>
            <person name="Bathe B."/>
            <person name="Bartels D."/>
            <person name="Bischoff N."/>
            <person name="Bott M."/>
            <person name="Burkovski A."/>
            <person name="Dusch N."/>
            <person name="Eggeling L."/>
            <person name="Eikmanns B.J."/>
            <person name="Gaigalat L."/>
            <person name="Goesmann A."/>
            <person name="Hartmann M."/>
            <person name="Huthmacher K."/>
            <person name="Kraemer R."/>
            <person name="Linke B."/>
            <person name="McHardy A.C."/>
            <person name="Meyer F."/>
            <person name="Moeckel B."/>
            <person name="Pfefferle W."/>
            <person name="Puehler A."/>
            <person name="Rey D.A."/>
            <person name="Rueckert C."/>
            <person name="Rupp O."/>
            <person name="Sahm H."/>
            <person name="Wendisch V.F."/>
            <person name="Wiegraebe I."/>
            <person name="Tauch A."/>
        </authorList>
    </citation>
    <scope>NUCLEOTIDE SEQUENCE [LARGE SCALE GENOMIC DNA]</scope>
    <source>
        <strain>ATCC 13032 / DSM 20300 / JCM 1318 / BCRC 11384 / CCUG 27702 / LMG 3730 / NBRC 12168 / NCIMB 10025 / NRRL B-2784 / 534</strain>
    </source>
</reference>
<reference key="3">
    <citation type="journal article" date="2005" name="Appl. Environ. Microbiol.">
        <title>Role of the ssu and seu genes of Corynebacterium glutamicum ATCC 13032 in utilization of sulfonates and sulfonate esters as sulfur sources.</title>
        <authorList>
            <person name="Koch D.J."/>
            <person name="Rueckert C."/>
            <person name="Rey D.A."/>
            <person name="Mix A."/>
            <person name="Puehler A."/>
            <person name="Kalinowski J."/>
        </authorList>
    </citation>
    <scope>FUNCTION IN ALIPHATIC SULFONATES TRANSPORT AND TAURINE TRANSPORT</scope>
    <source>
        <strain>ATCC 13032 / DSM 20300 / JCM 1318 / BCRC 11384 / CCUG 27702 / LMG 3730 / NBRC 12168 / NCIMB 10025 / NRRL B-2784 / 534</strain>
    </source>
</reference>
<keyword id="KW-0067">ATP-binding</keyword>
<keyword id="KW-1003">Cell membrane</keyword>
<keyword id="KW-0472">Membrane</keyword>
<keyword id="KW-0547">Nucleotide-binding</keyword>
<keyword id="KW-1185">Reference proteome</keyword>
<keyword id="KW-1278">Translocase</keyword>
<keyword id="KW-0813">Transport</keyword>